<protein>
    <recommendedName>
        <fullName>Extracellular endo-alpha-(1-&gt;5)-L-arabinanase 2</fullName>
        <shortName>ABN</shortName>
        <ecNumber>3.2.1.99</ecNumber>
    </recommendedName>
    <alternativeName>
        <fullName>Endo-1,5-alpha-L-arabinanase</fullName>
    </alternativeName>
</protein>
<name>EABN2_BACSU</name>
<accession>P42293</accession>
<accession>B3FRL6</accession>
<dbReference type="EC" id="3.2.1.99"/>
<dbReference type="EMBL" id="D31856">
    <property type="protein sequence ID" value="BAA06646.1"/>
    <property type="molecule type" value="Genomic_DNA"/>
</dbReference>
<dbReference type="EMBL" id="EU373814">
    <property type="protein sequence ID" value="ACB06752.1"/>
    <property type="molecule type" value="Genomic_DNA"/>
</dbReference>
<dbReference type="EMBL" id="AL009126">
    <property type="protein sequence ID" value="CAB15969.2"/>
    <property type="molecule type" value="Genomic_DNA"/>
</dbReference>
<dbReference type="EMBL" id="M20659">
    <property type="status" value="NOT_ANNOTATED_CDS"/>
    <property type="molecule type" value="Genomic_DNA"/>
</dbReference>
<dbReference type="PIR" id="E70076">
    <property type="entry name" value="E70076"/>
</dbReference>
<dbReference type="PDB" id="2X8F">
    <property type="method" value="X-ray"/>
    <property type="resolution" value="1.90 A"/>
    <property type="chains" value="A/B=1-469"/>
</dbReference>
<dbReference type="PDB" id="2X8S">
    <property type="method" value="X-ray"/>
    <property type="resolution" value="1.50 A"/>
    <property type="chains" value="A/B=1-469"/>
</dbReference>
<dbReference type="PDB" id="2X8T">
    <property type="method" value="X-ray"/>
    <property type="resolution" value="1.79 A"/>
    <property type="chains" value="A/B=1-469"/>
</dbReference>
<dbReference type="PDB" id="4COT">
    <property type="method" value="X-ray"/>
    <property type="resolution" value="1.90 A"/>
    <property type="chains" value="A=1-469"/>
</dbReference>
<dbReference type="PDBsum" id="2X8F"/>
<dbReference type="PDBsum" id="2X8S"/>
<dbReference type="PDBsum" id="2X8T"/>
<dbReference type="PDBsum" id="4COT"/>
<dbReference type="SMR" id="P42293"/>
<dbReference type="FunCoup" id="P42293">
    <property type="interactions" value="42"/>
</dbReference>
<dbReference type="STRING" id="224308.BSU39330"/>
<dbReference type="CAZy" id="GH43">
    <property type="family name" value="Glycoside Hydrolase Family 43"/>
</dbReference>
<dbReference type="PaxDb" id="224308-BSU39330"/>
<dbReference type="EnsemblBacteria" id="CAB15969">
    <property type="protein sequence ID" value="CAB15969"/>
    <property type="gene ID" value="BSU_39330"/>
</dbReference>
<dbReference type="GeneID" id="937533"/>
<dbReference type="KEGG" id="bsu:BSU39330"/>
<dbReference type="PATRIC" id="fig|224308.179.peg.4257"/>
<dbReference type="eggNOG" id="COG3507">
    <property type="taxonomic scope" value="Bacteria"/>
</dbReference>
<dbReference type="InParanoid" id="P42293"/>
<dbReference type="OrthoDB" id="9801455at2"/>
<dbReference type="PhylomeDB" id="P42293"/>
<dbReference type="BioCyc" id="BSUB:BSU39330-MONOMER"/>
<dbReference type="BRENDA" id="3.2.1.99">
    <property type="organism ID" value="658"/>
</dbReference>
<dbReference type="UniPathway" id="UPA00667"/>
<dbReference type="EvolutionaryTrace" id="P42293"/>
<dbReference type="Proteomes" id="UP000001570">
    <property type="component" value="Chromosome"/>
</dbReference>
<dbReference type="GO" id="GO:0005576">
    <property type="term" value="C:extracellular region"/>
    <property type="evidence" value="ECO:0007669"/>
    <property type="project" value="UniProtKB-SubCell"/>
</dbReference>
<dbReference type="GO" id="GO:0046558">
    <property type="term" value="F:arabinan endo-1,5-alpha-L-arabinosidase activity"/>
    <property type="evidence" value="ECO:0007669"/>
    <property type="project" value="UniProtKB-EC"/>
</dbReference>
<dbReference type="GO" id="GO:0046872">
    <property type="term" value="F:metal ion binding"/>
    <property type="evidence" value="ECO:0007669"/>
    <property type="project" value="UniProtKB-KW"/>
</dbReference>
<dbReference type="GO" id="GO:0031222">
    <property type="term" value="P:arabinan catabolic process"/>
    <property type="evidence" value="ECO:0007669"/>
    <property type="project" value="UniProtKB-UniPathway"/>
</dbReference>
<dbReference type="CDD" id="cd18832">
    <property type="entry name" value="GH43_GsAbnA-like"/>
    <property type="match status" value="1"/>
</dbReference>
<dbReference type="Gene3D" id="2.40.128.10">
    <property type="match status" value="1"/>
</dbReference>
<dbReference type="Gene3D" id="2.115.10.20">
    <property type="entry name" value="Glycosyl hydrolase domain, family 43"/>
    <property type="match status" value="1"/>
</dbReference>
<dbReference type="InterPro" id="IPR032291">
    <property type="entry name" value="Abn2_C"/>
</dbReference>
<dbReference type="InterPro" id="IPR050727">
    <property type="entry name" value="GH43_arabinanases"/>
</dbReference>
<dbReference type="InterPro" id="IPR006710">
    <property type="entry name" value="Glyco_hydro_43"/>
</dbReference>
<dbReference type="InterPro" id="IPR023296">
    <property type="entry name" value="Glyco_hydro_beta-prop_sf"/>
</dbReference>
<dbReference type="PANTHER" id="PTHR43301">
    <property type="entry name" value="ARABINAN ENDO-1,5-ALPHA-L-ARABINOSIDASE"/>
    <property type="match status" value="1"/>
</dbReference>
<dbReference type="PANTHER" id="PTHR43301:SF3">
    <property type="entry name" value="ARABINAN ENDO-1,5-ALPHA-L-ARABINOSIDASE A-RELATED"/>
    <property type="match status" value="1"/>
</dbReference>
<dbReference type="Pfam" id="PF16369">
    <property type="entry name" value="GH43_C"/>
    <property type="match status" value="1"/>
</dbReference>
<dbReference type="Pfam" id="PF04616">
    <property type="entry name" value="Glyco_hydro_43"/>
    <property type="match status" value="1"/>
</dbReference>
<dbReference type="SUPFAM" id="SSF75005">
    <property type="entry name" value="Arabinanase/levansucrase/invertase"/>
    <property type="match status" value="1"/>
</dbReference>
<evidence type="ECO:0000250" key="1"/>
<evidence type="ECO:0000255" key="2"/>
<evidence type="ECO:0000269" key="3">
    <source>
    </source>
</evidence>
<evidence type="ECO:0000269" key="4">
    <source>
    </source>
</evidence>
<evidence type="ECO:0000269" key="5">
    <source>
    </source>
</evidence>
<evidence type="ECO:0000305" key="6"/>
<evidence type="ECO:0000305" key="7">
    <source>
    </source>
</evidence>
<evidence type="ECO:0007829" key="8">
    <source>
        <dbReference type="PDB" id="2X8S"/>
    </source>
</evidence>
<evidence type="ECO:0007829" key="9">
    <source>
        <dbReference type="PDB" id="2X8T"/>
    </source>
</evidence>
<evidence type="ECO:0007829" key="10">
    <source>
        <dbReference type="PDB" id="4COT"/>
    </source>
</evidence>
<reference key="1">
    <citation type="journal article" date="1995" name="Microbiology">
        <title>Cloning and sequencing of a 29 kb region of the Bacillus subtilis genome containing the hut and wapA loci.</title>
        <authorList>
            <person name="Yoshida K."/>
            <person name="Sano H."/>
            <person name="Seki S."/>
            <person name="Oda M."/>
            <person name="Fujimura M."/>
            <person name="Fujita Y."/>
        </authorList>
    </citation>
    <scope>NUCLEOTIDE SEQUENCE [GENOMIC DNA]</scope>
    <source>
        <strain>168 / BGSC1A1</strain>
    </source>
</reference>
<reference key="2">
    <citation type="journal article" date="2008" name="J. Bacteriol.">
        <title>Characterization of abn2 (yxiA), encoding a Bacillus subtilis GH43 arabinanase, Abn2, and its role in arabino-polysaccharide degradation.</title>
        <authorList>
            <person name="Inacio J.M."/>
            <person name="de Sa-Nogueira I."/>
        </authorList>
    </citation>
    <scope>NUCLEOTIDE SEQUENCE [GENOMIC DNA]</scope>
    <scope>PROTEIN SEQUENCE OF 27-31</scope>
    <scope>FUNCTION</scope>
    <scope>DISRUPTION PHENOTYPE</scope>
    <scope>BIOPHYSICOCHEMICAL PROPERTIES</scope>
    <scope>INDUCTION</scope>
    <scope>SUBCELLULAR LOCATION</scope>
    <scope>SUBSTRATE SPECIFICITY</scope>
    <scope>NOMENCLATURE</scope>
    <source>
        <strain>168</strain>
    </source>
</reference>
<reference key="3">
    <citation type="journal article" date="1997" name="Nature">
        <title>The complete genome sequence of the Gram-positive bacterium Bacillus subtilis.</title>
        <authorList>
            <person name="Kunst F."/>
            <person name="Ogasawara N."/>
            <person name="Moszer I."/>
            <person name="Albertini A.M."/>
            <person name="Alloni G."/>
            <person name="Azevedo V."/>
            <person name="Bertero M.G."/>
            <person name="Bessieres P."/>
            <person name="Bolotin A."/>
            <person name="Borchert S."/>
            <person name="Borriss R."/>
            <person name="Boursier L."/>
            <person name="Brans A."/>
            <person name="Braun M."/>
            <person name="Brignell S.C."/>
            <person name="Bron S."/>
            <person name="Brouillet S."/>
            <person name="Bruschi C.V."/>
            <person name="Caldwell B."/>
            <person name="Capuano V."/>
            <person name="Carter N.M."/>
            <person name="Choi S.-K."/>
            <person name="Codani J.-J."/>
            <person name="Connerton I.F."/>
            <person name="Cummings N.J."/>
            <person name="Daniel R.A."/>
            <person name="Denizot F."/>
            <person name="Devine K.M."/>
            <person name="Duesterhoeft A."/>
            <person name="Ehrlich S.D."/>
            <person name="Emmerson P.T."/>
            <person name="Entian K.-D."/>
            <person name="Errington J."/>
            <person name="Fabret C."/>
            <person name="Ferrari E."/>
            <person name="Foulger D."/>
            <person name="Fritz C."/>
            <person name="Fujita M."/>
            <person name="Fujita Y."/>
            <person name="Fuma S."/>
            <person name="Galizzi A."/>
            <person name="Galleron N."/>
            <person name="Ghim S.-Y."/>
            <person name="Glaser P."/>
            <person name="Goffeau A."/>
            <person name="Golightly E.J."/>
            <person name="Grandi G."/>
            <person name="Guiseppi G."/>
            <person name="Guy B.J."/>
            <person name="Haga K."/>
            <person name="Haiech J."/>
            <person name="Harwood C.R."/>
            <person name="Henaut A."/>
            <person name="Hilbert H."/>
            <person name="Holsappel S."/>
            <person name="Hosono S."/>
            <person name="Hullo M.-F."/>
            <person name="Itaya M."/>
            <person name="Jones L.-M."/>
            <person name="Joris B."/>
            <person name="Karamata D."/>
            <person name="Kasahara Y."/>
            <person name="Klaerr-Blanchard M."/>
            <person name="Klein C."/>
            <person name="Kobayashi Y."/>
            <person name="Koetter P."/>
            <person name="Koningstein G."/>
            <person name="Krogh S."/>
            <person name="Kumano M."/>
            <person name="Kurita K."/>
            <person name="Lapidus A."/>
            <person name="Lardinois S."/>
            <person name="Lauber J."/>
            <person name="Lazarevic V."/>
            <person name="Lee S.-M."/>
            <person name="Levine A."/>
            <person name="Liu H."/>
            <person name="Masuda S."/>
            <person name="Mauel C."/>
            <person name="Medigue C."/>
            <person name="Medina N."/>
            <person name="Mellado R.P."/>
            <person name="Mizuno M."/>
            <person name="Moestl D."/>
            <person name="Nakai S."/>
            <person name="Noback M."/>
            <person name="Noone D."/>
            <person name="O'Reilly M."/>
            <person name="Ogawa K."/>
            <person name="Ogiwara A."/>
            <person name="Oudega B."/>
            <person name="Park S.-H."/>
            <person name="Parro V."/>
            <person name="Pohl T.M."/>
            <person name="Portetelle D."/>
            <person name="Porwollik S."/>
            <person name="Prescott A.M."/>
            <person name="Presecan E."/>
            <person name="Pujic P."/>
            <person name="Purnelle B."/>
            <person name="Rapoport G."/>
            <person name="Rey M."/>
            <person name="Reynolds S."/>
            <person name="Rieger M."/>
            <person name="Rivolta C."/>
            <person name="Rocha E."/>
            <person name="Roche B."/>
            <person name="Rose M."/>
            <person name="Sadaie Y."/>
            <person name="Sato T."/>
            <person name="Scanlan E."/>
            <person name="Schleich S."/>
            <person name="Schroeter R."/>
            <person name="Scoffone F."/>
            <person name="Sekiguchi J."/>
            <person name="Sekowska A."/>
            <person name="Seror S.J."/>
            <person name="Serror P."/>
            <person name="Shin B.-S."/>
            <person name="Soldo B."/>
            <person name="Sorokin A."/>
            <person name="Tacconi E."/>
            <person name="Takagi T."/>
            <person name="Takahashi H."/>
            <person name="Takemaru K."/>
            <person name="Takeuchi M."/>
            <person name="Tamakoshi A."/>
            <person name="Tanaka T."/>
            <person name="Terpstra P."/>
            <person name="Tognoni A."/>
            <person name="Tosato V."/>
            <person name="Uchiyama S."/>
            <person name="Vandenbol M."/>
            <person name="Vannier F."/>
            <person name="Vassarotti A."/>
            <person name="Viari A."/>
            <person name="Wambutt R."/>
            <person name="Wedler E."/>
            <person name="Wedler H."/>
            <person name="Weitzenegger T."/>
            <person name="Winters P."/>
            <person name="Wipat A."/>
            <person name="Yamamoto H."/>
            <person name="Yamane K."/>
            <person name="Yasumoto K."/>
            <person name="Yata K."/>
            <person name="Yoshida K."/>
            <person name="Yoshikawa H.-F."/>
            <person name="Zumstein E."/>
            <person name="Yoshikawa H."/>
            <person name="Danchin A."/>
        </authorList>
    </citation>
    <scope>NUCLEOTIDE SEQUENCE [LARGE SCALE GENOMIC DNA]</scope>
    <source>
        <strain>168</strain>
    </source>
</reference>
<reference key="4">
    <citation type="journal article" date="2009" name="Microbiology">
        <title>From a consortium sequence to a unified sequence: the Bacillus subtilis 168 reference genome a decade later.</title>
        <authorList>
            <person name="Barbe V."/>
            <person name="Cruveiller S."/>
            <person name="Kunst F."/>
            <person name="Lenoble P."/>
            <person name="Meurice G."/>
            <person name="Sekowska A."/>
            <person name="Vallenet D."/>
            <person name="Wang T."/>
            <person name="Moszer I."/>
            <person name="Medigue C."/>
            <person name="Danchin A."/>
        </authorList>
    </citation>
    <scope>SEQUENCE REVISION TO 175</scope>
</reference>
<reference key="5">
    <citation type="journal article" date="1988" name="J. Bacteriol.">
        <title>Cloning and nucleotide sequences of histidase and regulatory genes in the Bacillus subtilis hut operon and positive regulation of the operon.</title>
        <authorList>
            <person name="Oda M."/>
            <person name="Sugishita A."/>
            <person name="Furukawa K."/>
        </authorList>
    </citation>
    <scope>NUCLEOTIDE SEQUENCE [GENOMIC DNA] OF 1-171</scope>
</reference>
<reference key="6">
    <citation type="journal article" date="2008" name="Acta Crystallogr. F">
        <title>Overproduction, crystallization and preliminary X-ray characterization of Abn2, an endo-1,5-alpha-arabinanase from Bacillus subtilis.</title>
        <authorList>
            <person name="de Sanctis D."/>
            <person name="Bento I."/>
            <person name="Inacio J.M."/>
            <person name="Custodio S."/>
            <person name="de Sa-Nogueira I."/>
            <person name="Carrondo M.A."/>
        </authorList>
    </citation>
    <scope>SUBCELLULAR LOCATION</scope>
</reference>
<reference key="7">
    <citation type="journal article" date="2010" name="FEBS J.">
        <title>New evidence for the role of calcium in the glycosidase reaction of GH43 arabinanases.</title>
        <authorList>
            <person name="de Sanctis D."/>
            <person name="Inacio J.M."/>
            <person name="Lindley P.F."/>
            <person name="de Sa-Nogueira I."/>
            <person name="Bento I."/>
        </authorList>
    </citation>
    <scope>X-RAY CRYSTALLOGRAPHY (1.9 ANGSTROMS) OF MUTANTS ALA-171 AND HIS-318 IN COMPLEX WITH ALPHA-L-ARABINOFURANOSE AND CALCIUM IONS</scope>
    <scope>FUNCTION</scope>
    <scope>CATALYTIC ACTIVITY</scope>
    <scope>ACTIVE SITE</scope>
    <scope>MUTAGENESIS OF ASP-38; ASP-171; GLU-224 AND HIS-318</scope>
    <scope>SUBCELLULAR LOCATION</scope>
    <scope>BIOPHYSICOCHEMICAL PROPERTIES</scope>
    <scope>COFACTOR</scope>
    <scope>SUBUNIT</scope>
</reference>
<comment type="function">
    <text evidence="3 5">Involved in the degradation of arabinan and is a key enzyme in the complete degradation of the plant cell wall. Catalyzes the internal cleavage of alpha-(1-&gt;5)-L-arabinofuranosyl residues of the alpha-1,5-L-arabinan to produce arabino-oligosaccharides and L-arabinose. It is also active toward linear branched sugar beet arabinan, and pectin from apple.</text>
</comment>
<comment type="catalytic activity">
    <reaction evidence="5">
        <text>Endohydrolysis of (1-&gt;5)-alpha-arabinofuranosidic linkages in (1-&gt;5)-arabinans.</text>
        <dbReference type="EC" id="3.2.1.99"/>
    </reaction>
</comment>
<comment type="cofactor">
    <cofactor evidence="6">
        <name>Ca(2+)</name>
        <dbReference type="ChEBI" id="CHEBI:29108"/>
    </cofactor>
    <text evidence="6">Binds 1 Ca(2+) ion per subunit.</text>
</comment>
<comment type="biophysicochemical properties">
    <kinetics>
        <KM evidence="3 5">0.11 mM for linear-alpha-1,5-L-arabinan</KM>
        <KM evidence="3 5">2 mM for linear-alpha-1,5-L-arabinan (at pH 7.0 and 50 degrees Celsius)</KM>
        <Vmax evidence="3 5">0.25 mmol/min/mg enzyme for linear-alpha-1,5-L-arabinan (at pH 7.0 and 50 degrees Celsius)</Vmax>
    </kinetics>
    <phDependence>
        <text evidence="3 5">Optimum pH is 7.</text>
    </phDependence>
    <temperatureDependence>
        <text evidence="3 5">Optimum temperature is 50 degrees Celsius. It remains fully active after 30 minutes of preincubation at 50 degrees Celsius, however, after preincubation at 60 degrees Celsius, the residual activity is only 15%.</text>
    </temperatureDependence>
</comment>
<comment type="pathway">
    <text>Glycan metabolism; L-arabinan degradation.</text>
</comment>
<comment type="subunit">
    <text evidence="5">Homodimer.</text>
</comment>
<comment type="subcellular location">
    <subcellularLocation>
        <location evidence="3 4 5">Secreted</location>
    </subcellularLocation>
</comment>
<comment type="induction">
    <text evidence="3">Repressed by glucose, and induced by pectin and arabinan.</text>
</comment>
<comment type="disruption phenotype">
    <text evidence="3">No visible phenotype. Double mutant abn2/abnA induce an almost complete loss of this activity.</text>
</comment>
<comment type="similarity">
    <text evidence="6">Belongs to the glycosyl hydrolase 43 family.</text>
</comment>
<keyword id="KW-0002">3D-structure</keyword>
<keyword id="KW-0106">Calcium</keyword>
<keyword id="KW-0119">Carbohydrate metabolism</keyword>
<keyword id="KW-0903">Direct protein sequencing</keyword>
<keyword id="KW-0326">Glycosidase</keyword>
<keyword id="KW-0378">Hydrolase</keyword>
<keyword id="KW-0479">Metal-binding</keyword>
<keyword id="KW-1185">Reference proteome</keyword>
<keyword id="KW-0964">Secreted</keyword>
<keyword id="KW-0732">Signal</keyword>
<gene>
    <name type="primary">abn2</name>
    <name type="synonym">J3A</name>
    <name type="synonym">yxiA</name>
    <name type="ordered locus">BSU39330</name>
</gene>
<feature type="signal peptide" evidence="2">
    <location>
        <begin position="1"/>
        <end position="26"/>
    </location>
</feature>
<feature type="chain" id="PRO_0000012205" description="Extracellular endo-alpha-(1-&gt;5)-L-arabinanase 2">
    <location>
        <begin position="27"/>
        <end position="469"/>
    </location>
</feature>
<feature type="active site" description="Proton acceptor" evidence="7">
    <location>
        <position position="38"/>
    </location>
</feature>
<feature type="active site" description="Proton donor" evidence="5">
    <location>
        <position position="224"/>
    </location>
</feature>
<feature type="binding site" evidence="1">
    <location>
        <position position="38"/>
    </location>
    <ligand>
        <name>substrate</name>
    </ligand>
</feature>
<feature type="binding site" evidence="1">
    <location>
        <position position="122"/>
    </location>
    <ligand>
        <name>substrate</name>
    </ligand>
</feature>
<feature type="binding site" evidence="1">
    <location>
        <begin position="168"/>
        <end position="171"/>
    </location>
    <ligand>
        <name>substrate</name>
    </ligand>
</feature>
<feature type="binding site" evidence="7">
    <location>
        <begin position="188"/>
        <end position="190"/>
    </location>
    <ligand>
        <name>substrate</name>
    </ligand>
</feature>
<feature type="binding site" evidence="5">
    <location>
        <begin position="220"/>
        <end position="224"/>
    </location>
    <ligand>
        <name>substrate</name>
    </ligand>
</feature>
<feature type="binding site" evidence="2">
    <location>
        <position position="318"/>
    </location>
    <ligand>
        <name>Ca(2+)</name>
        <dbReference type="ChEBI" id="CHEBI:29108"/>
    </ligand>
</feature>
<feature type="site" description="Important for catalytic activity, responsible for pKa modulation of the active site Glu and correct orientation of both the proton donor and substrate" evidence="7">
    <location>
        <position position="171"/>
    </location>
</feature>
<feature type="site" description="Important for substrate recognition">
    <location>
        <position position="318"/>
    </location>
</feature>
<feature type="mutagenesis site" description="Loss of arabinanase activity." evidence="5">
    <original>D</original>
    <variation>A</variation>
    <location>
        <position position="38"/>
    </location>
</feature>
<feature type="mutagenesis site" description="Loss of arabinanase activity." evidence="5">
    <original>D</original>
    <variation>A</variation>
    <location>
        <position position="171"/>
    </location>
</feature>
<feature type="mutagenesis site" description="Loss of arabinanase activity." evidence="5">
    <original>E</original>
    <variation>A</variation>
    <location>
        <position position="224"/>
    </location>
</feature>
<feature type="mutagenesis site" description="Drastic decrease in arabinanase activity. Does not unduly disrupt the calcium cluster. Mutation does not disrupt the calcium cluster, but it relaxes the geometry of the cluster, resulting in a more planar arrangement of the calcium ion with five of the water molecules." evidence="5">
    <original>H</original>
    <variation>A</variation>
    <location>
        <position position="318"/>
    </location>
</feature>
<feature type="mutagenesis site" description="Loss of arabinanase activity." evidence="5">
    <original>H</original>
    <variation>Q</variation>
    <location>
        <position position="318"/>
    </location>
</feature>
<feature type="sequence conflict" description="In Ref. 1; BAA06646." evidence="6" ref="1">
    <original>F</original>
    <variation>S</variation>
    <location>
        <position position="175"/>
    </location>
</feature>
<feature type="strand" evidence="8">
    <location>
        <begin position="40"/>
        <end position="44"/>
    </location>
</feature>
<feature type="strand" evidence="8">
    <location>
        <begin position="47"/>
        <end position="51"/>
    </location>
</feature>
<feature type="helix" evidence="10">
    <location>
        <begin position="53"/>
        <end position="55"/>
    </location>
</feature>
<feature type="strand" evidence="8">
    <location>
        <begin position="57"/>
        <end position="65"/>
    </location>
</feature>
<feature type="strand" evidence="8">
    <location>
        <begin position="67"/>
        <end position="70"/>
    </location>
</feature>
<feature type="helix" evidence="8">
    <location>
        <begin position="83"/>
        <end position="86"/>
    </location>
</feature>
<feature type="helix" evidence="8">
    <location>
        <begin position="88"/>
        <end position="94"/>
    </location>
</feature>
<feature type="strand" evidence="8">
    <location>
        <begin position="103"/>
        <end position="106"/>
    </location>
</feature>
<feature type="strand" evidence="8">
    <location>
        <begin position="112"/>
        <end position="119"/>
    </location>
</feature>
<feature type="strand" evidence="8">
    <location>
        <begin position="121"/>
        <end position="123"/>
    </location>
</feature>
<feature type="strand" evidence="8">
    <location>
        <begin position="126"/>
        <end position="135"/>
    </location>
</feature>
<feature type="strand" evidence="8">
    <location>
        <begin position="141"/>
        <end position="149"/>
    </location>
</feature>
<feature type="strand" evidence="8">
    <location>
        <begin position="152"/>
        <end position="154"/>
    </location>
</feature>
<feature type="strand" evidence="8">
    <location>
        <begin position="158"/>
        <end position="160"/>
    </location>
</feature>
<feature type="turn" evidence="8">
    <location>
        <begin position="163"/>
        <end position="165"/>
    </location>
</feature>
<feature type="strand" evidence="8">
    <location>
        <begin position="173"/>
        <end position="176"/>
    </location>
</feature>
<feature type="strand" evidence="8">
    <location>
        <begin position="182"/>
        <end position="186"/>
    </location>
</feature>
<feature type="strand" evidence="8">
    <location>
        <begin position="193"/>
        <end position="198"/>
    </location>
</feature>
<feature type="turn" evidence="8">
    <location>
        <begin position="200"/>
        <end position="202"/>
    </location>
</feature>
<feature type="strand" evidence="8">
    <location>
        <begin position="203"/>
        <end position="205"/>
    </location>
</feature>
<feature type="strand" evidence="8">
    <location>
        <begin position="213"/>
        <end position="216"/>
    </location>
</feature>
<feature type="strand" evidence="8">
    <location>
        <begin position="222"/>
        <end position="231"/>
    </location>
</feature>
<feature type="turn" evidence="8">
    <location>
        <begin position="232"/>
        <end position="235"/>
    </location>
</feature>
<feature type="strand" evidence="8">
    <location>
        <begin position="236"/>
        <end position="247"/>
    </location>
</feature>
<feature type="strand" evidence="8">
    <location>
        <begin position="253"/>
        <end position="261"/>
    </location>
</feature>
<feature type="helix" evidence="8">
    <location>
        <begin position="274"/>
        <end position="276"/>
    </location>
</feature>
<feature type="helix" evidence="8">
    <location>
        <begin position="287"/>
        <end position="290"/>
    </location>
</feature>
<feature type="strand" evidence="8">
    <location>
        <begin position="293"/>
        <end position="298"/>
    </location>
</feature>
<feature type="strand" evidence="8">
    <location>
        <begin position="300"/>
        <end position="302"/>
    </location>
</feature>
<feature type="strand" evidence="9">
    <location>
        <begin position="306"/>
        <end position="308"/>
    </location>
</feature>
<feature type="strand" evidence="8">
    <location>
        <begin position="312"/>
        <end position="323"/>
    </location>
</feature>
<feature type="turn" evidence="8">
    <location>
        <begin position="325"/>
        <end position="327"/>
    </location>
</feature>
<feature type="strand" evidence="8">
    <location>
        <begin position="330"/>
        <end position="337"/>
    </location>
</feature>
<feature type="strand" evidence="8">
    <location>
        <begin position="346"/>
        <end position="354"/>
    </location>
</feature>
<feature type="strand" evidence="8">
    <location>
        <begin position="360"/>
        <end position="362"/>
    </location>
</feature>
<feature type="helix" evidence="8">
    <location>
        <begin position="377"/>
        <end position="380"/>
    </location>
</feature>
<feature type="strand" evidence="8">
    <location>
        <begin position="382"/>
        <end position="388"/>
    </location>
</feature>
<feature type="strand" evidence="8">
    <location>
        <begin position="401"/>
        <end position="405"/>
    </location>
</feature>
<feature type="strand" evidence="8">
    <location>
        <begin position="409"/>
        <end position="415"/>
    </location>
</feature>
<feature type="strand" evidence="8">
    <location>
        <begin position="417"/>
        <end position="422"/>
    </location>
</feature>
<feature type="turn" evidence="8">
    <location>
        <begin position="423"/>
        <end position="425"/>
    </location>
</feature>
<feature type="strand" evidence="8">
    <location>
        <begin position="426"/>
        <end position="431"/>
    </location>
</feature>
<feature type="strand" evidence="8">
    <location>
        <begin position="434"/>
        <end position="445"/>
    </location>
</feature>
<feature type="turn" evidence="8">
    <location>
        <begin position="446"/>
        <end position="449"/>
    </location>
</feature>
<feature type="strand" evidence="8">
    <location>
        <begin position="450"/>
        <end position="458"/>
    </location>
</feature>
<feature type="strand" evidence="8">
    <location>
        <begin position="464"/>
        <end position="469"/>
    </location>
</feature>
<organism>
    <name type="scientific">Bacillus subtilis (strain 168)</name>
    <dbReference type="NCBI Taxonomy" id="224308"/>
    <lineage>
        <taxon>Bacteria</taxon>
        <taxon>Bacillati</taxon>
        <taxon>Bacillota</taxon>
        <taxon>Bacilli</taxon>
        <taxon>Bacillales</taxon>
        <taxon>Bacillaceae</taxon>
        <taxon>Bacillus</taxon>
    </lineage>
</organism>
<sequence length="469" mass="52607">MFNRLFRVCFLAALIMAFTLPNSVYAQKPIFKEVSVHDPSIIETNGTFYVFGSHLASAKSNDLMQWQQLTTSVSNDNPLIPNVYEELKETFEWAQSDTLWAADVTQLADGKYYMYYNACRGDSPRSAMGVAVADNIEGPYKNKGIFLKSGMEGTSSDGTPYDATKHPNVVDPHTFFDKDGKLWMVYGSYSGGIFILEMNPKTGFPLPGQGYGKKLLGGNHSRIEGPYVLYNPDTQYYYLYLSYGGLDATGGYNIRVARSKKPDGPYYDAEGNPMLDVRGKGGTFFDDRSIEPYGVKLMGSYTFETENEKGTGYVSPGHNSAYYDEKTGRSYLIFHTRFPGRGEEHEVRVHQLFMNKDGWPVAAPYRYAGETLKEVKQKDITGTYKLIQHGKDISADIKQTINIQLNKNHTISGEMTGTWRKTGKNTADITLAGKKYNGVFLRQWDSVREKNVMTFSVLNTSGEAVWGSK</sequence>
<proteinExistence type="evidence at protein level"/>